<keyword id="KW-0030">Aminoacyl-tRNA synthetase</keyword>
<keyword id="KW-0067">ATP-binding</keyword>
<keyword id="KW-0963">Cytoplasm</keyword>
<keyword id="KW-0436">Ligase</keyword>
<keyword id="KW-0460">Magnesium</keyword>
<keyword id="KW-0479">Metal-binding</keyword>
<keyword id="KW-0547">Nucleotide-binding</keyword>
<keyword id="KW-0648">Protein biosynthesis</keyword>
<keyword id="KW-1185">Reference proteome</keyword>
<accession>O42870</accession>
<comment type="catalytic activity">
    <reaction>
        <text>tRNA(Phe) + L-phenylalanine + ATP = L-phenylalanyl-tRNA(Phe) + AMP + diphosphate + H(+)</text>
        <dbReference type="Rhea" id="RHEA:19413"/>
        <dbReference type="Rhea" id="RHEA-COMP:9668"/>
        <dbReference type="Rhea" id="RHEA-COMP:9699"/>
        <dbReference type="ChEBI" id="CHEBI:15378"/>
        <dbReference type="ChEBI" id="CHEBI:30616"/>
        <dbReference type="ChEBI" id="CHEBI:33019"/>
        <dbReference type="ChEBI" id="CHEBI:58095"/>
        <dbReference type="ChEBI" id="CHEBI:78442"/>
        <dbReference type="ChEBI" id="CHEBI:78531"/>
        <dbReference type="ChEBI" id="CHEBI:456215"/>
        <dbReference type="EC" id="6.1.1.20"/>
    </reaction>
</comment>
<comment type="cofactor">
    <cofactor evidence="2">
        <name>Mg(2+)</name>
        <dbReference type="ChEBI" id="CHEBI:18420"/>
    </cofactor>
</comment>
<comment type="subunit">
    <text evidence="1">Tetramer of two alpha and two beta subunits.</text>
</comment>
<comment type="subcellular location">
    <subcellularLocation>
        <location evidence="4">Cytoplasm</location>
    </subcellularLocation>
</comment>
<comment type="similarity">
    <text evidence="5">Belongs to the class-II aminoacyl-tRNA synthetase family. Phe-tRNA synthetase alpha subunit type 2 subfamily.</text>
</comment>
<dbReference type="EC" id="6.1.1.20"/>
<dbReference type="EMBL" id="CU329670">
    <property type="protein sequence ID" value="CAA15915.1"/>
    <property type="molecule type" value="Genomic_DNA"/>
</dbReference>
<dbReference type="PIR" id="T11642">
    <property type="entry name" value="T11642"/>
</dbReference>
<dbReference type="RefSeq" id="NP_594078.1">
    <property type="nucleotide sequence ID" value="NM_001019507.2"/>
</dbReference>
<dbReference type="SMR" id="O42870"/>
<dbReference type="BioGRID" id="280061">
    <property type="interactions" value="5"/>
</dbReference>
<dbReference type="FunCoup" id="O42870">
    <property type="interactions" value="870"/>
</dbReference>
<dbReference type="STRING" id="284812.O42870"/>
<dbReference type="iPTMnet" id="O42870"/>
<dbReference type="PaxDb" id="4896-SPAC3G9.06.1"/>
<dbReference type="EnsemblFungi" id="SPAC3G9.06.1">
    <property type="protein sequence ID" value="SPAC3G9.06.1:pep"/>
    <property type="gene ID" value="SPAC3G9.06"/>
</dbReference>
<dbReference type="GeneID" id="2543647"/>
<dbReference type="KEGG" id="spo:2543647"/>
<dbReference type="PomBase" id="SPAC3G9.06">
    <property type="gene designation" value="frs2"/>
</dbReference>
<dbReference type="VEuPathDB" id="FungiDB:SPAC3G9.06"/>
<dbReference type="eggNOG" id="KOG2784">
    <property type="taxonomic scope" value="Eukaryota"/>
</dbReference>
<dbReference type="HOGENOM" id="CLU_025086_2_0_1"/>
<dbReference type="InParanoid" id="O42870"/>
<dbReference type="OMA" id="QIEGWVM"/>
<dbReference type="PhylomeDB" id="O42870"/>
<dbReference type="PRO" id="PR:O42870"/>
<dbReference type="Proteomes" id="UP000002485">
    <property type="component" value="Chromosome I"/>
</dbReference>
<dbReference type="GO" id="GO:0005737">
    <property type="term" value="C:cytoplasm"/>
    <property type="evidence" value="ECO:0000318"/>
    <property type="project" value="GO_Central"/>
</dbReference>
<dbReference type="GO" id="GO:0005829">
    <property type="term" value="C:cytosol"/>
    <property type="evidence" value="ECO:0007005"/>
    <property type="project" value="PomBase"/>
</dbReference>
<dbReference type="GO" id="GO:0009328">
    <property type="term" value="C:phenylalanine-tRNA ligase complex"/>
    <property type="evidence" value="ECO:0000318"/>
    <property type="project" value="GO_Central"/>
</dbReference>
<dbReference type="GO" id="GO:0005524">
    <property type="term" value="F:ATP binding"/>
    <property type="evidence" value="ECO:0007669"/>
    <property type="project" value="UniProtKB-KW"/>
</dbReference>
<dbReference type="GO" id="GO:0000287">
    <property type="term" value="F:magnesium ion binding"/>
    <property type="evidence" value="ECO:0000250"/>
    <property type="project" value="UniProtKB"/>
</dbReference>
<dbReference type="GO" id="GO:0004826">
    <property type="term" value="F:phenylalanine-tRNA ligase activity"/>
    <property type="evidence" value="ECO:0000318"/>
    <property type="project" value="GO_Central"/>
</dbReference>
<dbReference type="GO" id="GO:0000049">
    <property type="term" value="F:tRNA binding"/>
    <property type="evidence" value="ECO:0007669"/>
    <property type="project" value="InterPro"/>
</dbReference>
<dbReference type="GO" id="GO:0002181">
    <property type="term" value="P:cytoplasmic translation"/>
    <property type="evidence" value="ECO:0000303"/>
    <property type="project" value="PomBase"/>
</dbReference>
<dbReference type="GO" id="GO:0006432">
    <property type="term" value="P:phenylalanyl-tRNA aminoacylation"/>
    <property type="evidence" value="ECO:0000318"/>
    <property type="project" value="GO_Central"/>
</dbReference>
<dbReference type="CDD" id="cd00496">
    <property type="entry name" value="PheRS_alpha_core"/>
    <property type="match status" value="1"/>
</dbReference>
<dbReference type="FunFam" id="1.10.10.2330:FF:000002">
    <property type="entry name" value="Phenylalanyl-tRNA synthetase alpha chain"/>
    <property type="match status" value="1"/>
</dbReference>
<dbReference type="FunFam" id="3.30.930.10:FF:000028">
    <property type="entry name" value="Phenylalanyl-tRNA synthetase alpha chain"/>
    <property type="match status" value="1"/>
</dbReference>
<dbReference type="Gene3D" id="1.10.10.2320">
    <property type="match status" value="1"/>
</dbReference>
<dbReference type="Gene3D" id="1.10.10.2330">
    <property type="match status" value="1"/>
</dbReference>
<dbReference type="Gene3D" id="3.30.1370.240">
    <property type="match status" value="1"/>
</dbReference>
<dbReference type="Gene3D" id="3.30.930.10">
    <property type="entry name" value="Bira Bifunctional Protein, Domain 2"/>
    <property type="match status" value="1"/>
</dbReference>
<dbReference type="InterPro" id="IPR006195">
    <property type="entry name" value="aa-tRNA-synth_II"/>
</dbReference>
<dbReference type="InterPro" id="IPR045864">
    <property type="entry name" value="aa-tRNA-synth_II/BPL/LPL"/>
</dbReference>
<dbReference type="InterPro" id="IPR004529">
    <property type="entry name" value="Phe-tRNA-synth_IIc_asu"/>
</dbReference>
<dbReference type="InterPro" id="IPR002319">
    <property type="entry name" value="Phenylalanyl-tRNA_Synthase"/>
</dbReference>
<dbReference type="InterPro" id="IPR040725">
    <property type="entry name" value="PheRS_DBD3"/>
</dbReference>
<dbReference type="NCBIfam" id="TIGR00468">
    <property type="entry name" value="pheS"/>
    <property type="match status" value="1"/>
</dbReference>
<dbReference type="NCBIfam" id="NF003210">
    <property type="entry name" value="PRK04172.1"/>
    <property type="match status" value="1"/>
</dbReference>
<dbReference type="PANTHER" id="PTHR11538:SF40">
    <property type="entry name" value="PHENYLALANINE--TRNA LIGASE ALPHA SUBUNIT"/>
    <property type="match status" value="1"/>
</dbReference>
<dbReference type="PANTHER" id="PTHR11538">
    <property type="entry name" value="PHENYLALANYL-TRNA SYNTHETASE"/>
    <property type="match status" value="1"/>
</dbReference>
<dbReference type="Pfam" id="PF18553">
    <property type="entry name" value="PheRS_DBD3"/>
    <property type="match status" value="1"/>
</dbReference>
<dbReference type="Pfam" id="PF01409">
    <property type="entry name" value="tRNA-synt_2d"/>
    <property type="match status" value="1"/>
</dbReference>
<dbReference type="SUPFAM" id="SSF55681">
    <property type="entry name" value="Class II aaRS and biotin synthetases"/>
    <property type="match status" value="1"/>
</dbReference>
<dbReference type="PROSITE" id="PS50862">
    <property type="entry name" value="AA_TRNA_LIGASE_II"/>
    <property type="match status" value="1"/>
</dbReference>
<reference key="1">
    <citation type="journal article" date="2002" name="Nature">
        <title>The genome sequence of Schizosaccharomyces pombe.</title>
        <authorList>
            <person name="Wood V."/>
            <person name="Gwilliam R."/>
            <person name="Rajandream M.A."/>
            <person name="Lyne M.H."/>
            <person name="Lyne R."/>
            <person name="Stewart A."/>
            <person name="Sgouros J.G."/>
            <person name="Peat N."/>
            <person name="Hayles J."/>
            <person name="Baker S.G."/>
            <person name="Basham D."/>
            <person name="Bowman S."/>
            <person name="Brooks K."/>
            <person name="Brown D."/>
            <person name="Brown S."/>
            <person name="Chillingworth T."/>
            <person name="Churcher C.M."/>
            <person name="Collins M."/>
            <person name="Connor R."/>
            <person name="Cronin A."/>
            <person name="Davis P."/>
            <person name="Feltwell T."/>
            <person name="Fraser A."/>
            <person name="Gentles S."/>
            <person name="Goble A."/>
            <person name="Hamlin N."/>
            <person name="Harris D.E."/>
            <person name="Hidalgo J."/>
            <person name="Hodgson G."/>
            <person name="Holroyd S."/>
            <person name="Hornsby T."/>
            <person name="Howarth S."/>
            <person name="Huckle E.J."/>
            <person name="Hunt S."/>
            <person name="Jagels K."/>
            <person name="James K.D."/>
            <person name="Jones L."/>
            <person name="Jones M."/>
            <person name="Leather S."/>
            <person name="McDonald S."/>
            <person name="McLean J."/>
            <person name="Mooney P."/>
            <person name="Moule S."/>
            <person name="Mungall K.L."/>
            <person name="Murphy L.D."/>
            <person name="Niblett D."/>
            <person name="Odell C."/>
            <person name="Oliver K."/>
            <person name="O'Neil S."/>
            <person name="Pearson D."/>
            <person name="Quail M.A."/>
            <person name="Rabbinowitsch E."/>
            <person name="Rutherford K.M."/>
            <person name="Rutter S."/>
            <person name="Saunders D."/>
            <person name="Seeger K."/>
            <person name="Sharp S."/>
            <person name="Skelton J."/>
            <person name="Simmonds M.N."/>
            <person name="Squares R."/>
            <person name="Squares S."/>
            <person name="Stevens K."/>
            <person name="Taylor K."/>
            <person name="Taylor R.G."/>
            <person name="Tivey A."/>
            <person name="Walsh S.V."/>
            <person name="Warren T."/>
            <person name="Whitehead S."/>
            <person name="Woodward J.R."/>
            <person name="Volckaert G."/>
            <person name="Aert R."/>
            <person name="Robben J."/>
            <person name="Grymonprez B."/>
            <person name="Weltjens I."/>
            <person name="Vanstreels E."/>
            <person name="Rieger M."/>
            <person name="Schaefer M."/>
            <person name="Mueller-Auer S."/>
            <person name="Gabel C."/>
            <person name="Fuchs M."/>
            <person name="Duesterhoeft A."/>
            <person name="Fritzc C."/>
            <person name="Holzer E."/>
            <person name="Moestl D."/>
            <person name="Hilbert H."/>
            <person name="Borzym K."/>
            <person name="Langer I."/>
            <person name="Beck A."/>
            <person name="Lehrach H."/>
            <person name="Reinhardt R."/>
            <person name="Pohl T.M."/>
            <person name="Eger P."/>
            <person name="Zimmermann W."/>
            <person name="Wedler H."/>
            <person name="Wambutt R."/>
            <person name="Purnelle B."/>
            <person name="Goffeau A."/>
            <person name="Cadieu E."/>
            <person name="Dreano S."/>
            <person name="Gloux S."/>
            <person name="Lelaure V."/>
            <person name="Mottier S."/>
            <person name="Galibert F."/>
            <person name="Aves S.J."/>
            <person name="Xiang Z."/>
            <person name="Hunt C."/>
            <person name="Moore K."/>
            <person name="Hurst S.M."/>
            <person name="Lucas M."/>
            <person name="Rochet M."/>
            <person name="Gaillardin C."/>
            <person name="Tallada V.A."/>
            <person name="Garzon A."/>
            <person name="Thode G."/>
            <person name="Daga R.R."/>
            <person name="Cruzado L."/>
            <person name="Jimenez J."/>
            <person name="Sanchez M."/>
            <person name="del Rey F."/>
            <person name="Benito J."/>
            <person name="Dominguez A."/>
            <person name="Revuelta J.L."/>
            <person name="Moreno S."/>
            <person name="Armstrong J."/>
            <person name="Forsburg S.L."/>
            <person name="Cerutti L."/>
            <person name="Lowe T."/>
            <person name="McCombie W.R."/>
            <person name="Paulsen I."/>
            <person name="Potashkin J."/>
            <person name="Shpakovski G.V."/>
            <person name="Ussery D."/>
            <person name="Barrell B.G."/>
            <person name="Nurse P."/>
        </authorList>
    </citation>
    <scope>NUCLEOTIDE SEQUENCE [LARGE SCALE GENOMIC DNA]</scope>
    <source>
        <strain>972 / ATCC 24843</strain>
    </source>
</reference>
<reference key="2">
    <citation type="journal article" date="2006" name="Nat. Biotechnol.">
        <title>ORFeome cloning and global analysis of protein localization in the fission yeast Schizosaccharomyces pombe.</title>
        <authorList>
            <person name="Matsuyama A."/>
            <person name="Arai R."/>
            <person name="Yashiroda Y."/>
            <person name="Shirai A."/>
            <person name="Kamata A."/>
            <person name="Sekido S."/>
            <person name="Kobayashi Y."/>
            <person name="Hashimoto A."/>
            <person name="Hamamoto M."/>
            <person name="Hiraoka Y."/>
            <person name="Horinouchi S."/>
            <person name="Yoshida M."/>
        </authorList>
    </citation>
    <scope>SUBCELLULAR LOCATION [LARGE SCALE ANALYSIS]</scope>
</reference>
<evidence type="ECO:0000250" key="1"/>
<evidence type="ECO:0000250" key="2">
    <source>
        <dbReference type="UniProtKB" id="A5K9S0"/>
    </source>
</evidence>
<evidence type="ECO:0000250" key="3">
    <source>
        <dbReference type="UniProtKB" id="Q9Y285"/>
    </source>
</evidence>
<evidence type="ECO:0000269" key="4">
    <source>
    </source>
</evidence>
<evidence type="ECO:0000305" key="5"/>
<sequence length="499" mass="56266">MSKLEALQVFLLEKLNEKNEIPNTSHLEFDGKKLGPQEAQSAILSLAAKNMIEFSRHEIEIYNLTAEGENICANGSHEAKVYNEICASMSGLNIGELKKKLGNSAGIGQGRAFKLGWIKKDGDKLVKNTDSITDETPKVLSEIKEHGTISDSKTLTDLKKRKLVERNKIMYFSLRKGPNFSLQIEKLNTDLTAEMITSRSWESAKFKSYNFAAEGIPPAGGCLHPLMKVREEFRKFFFELGFEEMPTNNFVESGFWNFDALFVPQQHSARDAQDTFFLKVPASTDKLPDPEYVARVKATHENGGETKGIGYRAPFSLEETRKLVLRTHTTAVSANMLYKLAQNGFHPAKYFSIDRVFRNETVDATHLAEFHQVEGVICDRNITLGDLIGFLEVFFGKMNVKNLRFKPAYNPYTEPSLEVFSYHEKLGKWVEVGNSGMFRPEMLEPMGLPKDVRCLGFGLSLERPTMIKYGVADIRQLIGPKVNLDLIEASPAVRLDKEE</sequence>
<organism>
    <name type="scientific">Schizosaccharomyces pombe (strain 972 / ATCC 24843)</name>
    <name type="common">Fission yeast</name>
    <dbReference type="NCBI Taxonomy" id="284812"/>
    <lineage>
        <taxon>Eukaryota</taxon>
        <taxon>Fungi</taxon>
        <taxon>Dikarya</taxon>
        <taxon>Ascomycota</taxon>
        <taxon>Taphrinomycotina</taxon>
        <taxon>Schizosaccharomycetes</taxon>
        <taxon>Schizosaccharomycetales</taxon>
        <taxon>Schizosaccharomycetaceae</taxon>
        <taxon>Schizosaccharomyces</taxon>
    </lineage>
</organism>
<feature type="chain" id="PRO_0000126827" description="Phenylalanine--tRNA ligase alpha subunit">
    <location>
        <begin position="1"/>
        <end position="499"/>
    </location>
</feature>
<feature type="binding site" evidence="3">
    <location>
        <position position="330"/>
    </location>
    <ligand>
        <name>L-phenylalanine</name>
        <dbReference type="ChEBI" id="CHEBI:58095"/>
    </ligand>
</feature>
<feature type="binding site" evidence="3">
    <location>
        <begin position="372"/>
        <end position="374"/>
    </location>
    <ligand>
        <name>L-phenylalanine</name>
        <dbReference type="ChEBI" id="CHEBI:58095"/>
    </ligand>
</feature>
<feature type="binding site" evidence="3">
    <location>
        <position position="412"/>
    </location>
    <ligand>
        <name>L-phenylalanine</name>
        <dbReference type="ChEBI" id="CHEBI:58095"/>
    </ligand>
</feature>
<feature type="binding site" evidence="2">
    <location>
        <position position="414"/>
    </location>
    <ligand>
        <name>Mg(2+)</name>
        <dbReference type="ChEBI" id="CHEBI:18420"/>
        <note>shared with beta subunit</note>
    </ligand>
</feature>
<feature type="binding site" evidence="3">
    <location>
        <position position="438"/>
    </location>
    <ligand>
        <name>L-phenylalanine</name>
        <dbReference type="ChEBI" id="CHEBI:58095"/>
    </ligand>
</feature>
<protein>
    <recommendedName>
        <fullName>Phenylalanine--tRNA ligase alpha subunit</fullName>
        <ecNumber>6.1.1.20</ecNumber>
    </recommendedName>
    <alternativeName>
        <fullName>Phenylalanyl-tRNA synthetase alpha subunit</fullName>
        <shortName>PheRS</shortName>
    </alternativeName>
</protein>
<gene>
    <name type="primary">frs2</name>
    <name type="ORF">SPAC3G9.06</name>
</gene>
<name>SYFA_SCHPO</name>
<proteinExistence type="inferred from homology"/>